<sequence>MTKLAYFECPTGIAGDMCLGALLDLGVPLSLLQDYFRRLDIEQEFELQVSAVHRQSQQATYVRVELGAEPGPPGKHQHSHHRHLPEIERLILSAGLPHQAERWSLDIFRNLALAEGKVHGIEPNRVHFHEVGATDAIVDIVGTCLGLHWLGVEEMFCSALPTGGGTVKAAHGKLSVPVPAVLQLWQTRQVPVYDNGIHKELVTPTGAAIATTLAQSFGPPPPLSLHQIGLGAGTLDLSLPNILRIWLGESAASPASGTHPETVTVLETQIDDLNPQAFGYVFDALFQVGALDVFTQAVGMKKSRPGILLTVICRPETVSACETVIFKETSTLGIRRSQQQRTALQREIKTIDTAYGPVQIKLAYHDQQLVNVQPEYEDCAQIAQTHHLSWQQVYQAALLAWYQQSEIIGVK</sequence>
<accession>B0C8E3</accession>
<feature type="chain" id="PRO_1000136684" description="Putative nickel insertion protein">
    <location>
        <begin position="1"/>
        <end position="411"/>
    </location>
</feature>
<protein>
    <recommendedName>
        <fullName evidence="1">Putative nickel insertion protein</fullName>
    </recommendedName>
</protein>
<name>Y5136_ACAM1</name>
<reference key="1">
    <citation type="journal article" date="2008" name="Proc. Natl. Acad. Sci. U.S.A.">
        <title>Niche adaptation and genome expansion in the chlorophyll d-producing cyanobacterium Acaryochloris marina.</title>
        <authorList>
            <person name="Swingley W.D."/>
            <person name="Chen M."/>
            <person name="Cheung P.C."/>
            <person name="Conrad A.L."/>
            <person name="Dejesa L.C."/>
            <person name="Hao J."/>
            <person name="Honchak B.M."/>
            <person name="Karbach L.E."/>
            <person name="Kurdoglu A."/>
            <person name="Lahiri S."/>
            <person name="Mastrian S.D."/>
            <person name="Miyashita H."/>
            <person name="Page L."/>
            <person name="Ramakrishna P."/>
            <person name="Satoh S."/>
            <person name="Sattley W.M."/>
            <person name="Shimada Y."/>
            <person name="Taylor H.L."/>
            <person name="Tomo T."/>
            <person name="Tsuchiya T."/>
            <person name="Wang Z.T."/>
            <person name="Raymond J."/>
            <person name="Mimuro M."/>
            <person name="Blankenship R.E."/>
            <person name="Touchman J.W."/>
        </authorList>
    </citation>
    <scope>NUCLEOTIDE SEQUENCE [LARGE SCALE GENOMIC DNA]</scope>
    <source>
        <strain>MBIC 11017</strain>
    </source>
</reference>
<dbReference type="EMBL" id="CP000828">
    <property type="protein sequence ID" value="ABW30098.1"/>
    <property type="molecule type" value="Genomic_DNA"/>
</dbReference>
<dbReference type="SMR" id="B0C8E3"/>
<dbReference type="STRING" id="329726.AM1_5136"/>
<dbReference type="KEGG" id="amr:AM1_5136"/>
<dbReference type="eggNOG" id="COG1641">
    <property type="taxonomic scope" value="Bacteria"/>
</dbReference>
<dbReference type="HOGENOM" id="CLU_028523_2_1_3"/>
<dbReference type="OrthoDB" id="9765625at2"/>
<dbReference type="Proteomes" id="UP000000268">
    <property type="component" value="Chromosome"/>
</dbReference>
<dbReference type="GO" id="GO:0016829">
    <property type="term" value="F:lyase activity"/>
    <property type="evidence" value="ECO:0007669"/>
    <property type="project" value="UniProtKB-UniRule"/>
</dbReference>
<dbReference type="GO" id="GO:0016151">
    <property type="term" value="F:nickel cation binding"/>
    <property type="evidence" value="ECO:0007669"/>
    <property type="project" value="UniProtKB-UniRule"/>
</dbReference>
<dbReference type="Gene3D" id="3.10.20.300">
    <property type="entry name" value="mk0293 like domain"/>
    <property type="match status" value="1"/>
</dbReference>
<dbReference type="Gene3D" id="3.30.70.1380">
    <property type="entry name" value="Transcriptional regulatory protein pf0864 domain like"/>
    <property type="match status" value="1"/>
</dbReference>
<dbReference type="HAMAP" id="MF_01074">
    <property type="entry name" value="LarC"/>
    <property type="match status" value="1"/>
</dbReference>
<dbReference type="InterPro" id="IPR002822">
    <property type="entry name" value="Ni_insertion"/>
</dbReference>
<dbReference type="NCBIfam" id="TIGR00299">
    <property type="entry name" value="nickel pincer cofactor biosynthesis protein LarC"/>
    <property type="match status" value="1"/>
</dbReference>
<dbReference type="PANTHER" id="PTHR36566">
    <property type="entry name" value="NICKEL INSERTION PROTEIN-RELATED"/>
    <property type="match status" value="1"/>
</dbReference>
<dbReference type="PANTHER" id="PTHR36566:SF1">
    <property type="entry name" value="PYRIDINIUM-3,5-BISTHIOCARBOXYLIC ACID MONONUCLEOTIDE NICKEL INSERTION PROTEIN"/>
    <property type="match status" value="1"/>
</dbReference>
<dbReference type="Pfam" id="PF01969">
    <property type="entry name" value="Ni_insertion"/>
    <property type="match status" value="1"/>
</dbReference>
<gene>
    <name type="ordered locus">AM1_5136</name>
</gene>
<organism>
    <name type="scientific">Acaryochloris marina (strain MBIC 11017)</name>
    <dbReference type="NCBI Taxonomy" id="329726"/>
    <lineage>
        <taxon>Bacteria</taxon>
        <taxon>Bacillati</taxon>
        <taxon>Cyanobacteriota</taxon>
        <taxon>Cyanophyceae</taxon>
        <taxon>Acaryochloridales</taxon>
        <taxon>Acaryochloridaceae</taxon>
        <taxon>Acaryochloris</taxon>
    </lineage>
</organism>
<proteinExistence type="inferred from homology"/>
<evidence type="ECO:0000255" key="1">
    <source>
        <dbReference type="HAMAP-Rule" id="MF_01074"/>
    </source>
</evidence>
<comment type="similarity">
    <text evidence="1">Belongs to the LarC family.</text>
</comment>
<keyword id="KW-0533">Nickel</keyword>
<keyword id="KW-1185">Reference proteome</keyword>